<protein>
    <recommendedName>
        <fullName evidence="1">Large ribosomal subunit protein eL32</fullName>
    </recommendedName>
    <alternativeName>
        <fullName>60S ribosomal protein L32</fullName>
    </alternativeName>
</protein>
<name>RL32_CANGA</name>
<reference key="1">
    <citation type="journal article" date="2004" name="Nature">
        <title>Genome evolution in yeasts.</title>
        <authorList>
            <person name="Dujon B."/>
            <person name="Sherman D."/>
            <person name="Fischer G."/>
            <person name="Durrens P."/>
            <person name="Casaregola S."/>
            <person name="Lafontaine I."/>
            <person name="de Montigny J."/>
            <person name="Marck C."/>
            <person name="Neuveglise C."/>
            <person name="Talla E."/>
            <person name="Goffard N."/>
            <person name="Frangeul L."/>
            <person name="Aigle M."/>
            <person name="Anthouard V."/>
            <person name="Babour A."/>
            <person name="Barbe V."/>
            <person name="Barnay S."/>
            <person name="Blanchin S."/>
            <person name="Beckerich J.-M."/>
            <person name="Beyne E."/>
            <person name="Bleykasten C."/>
            <person name="Boisrame A."/>
            <person name="Boyer J."/>
            <person name="Cattolico L."/>
            <person name="Confanioleri F."/>
            <person name="de Daruvar A."/>
            <person name="Despons L."/>
            <person name="Fabre E."/>
            <person name="Fairhead C."/>
            <person name="Ferry-Dumazet H."/>
            <person name="Groppi A."/>
            <person name="Hantraye F."/>
            <person name="Hennequin C."/>
            <person name="Jauniaux N."/>
            <person name="Joyet P."/>
            <person name="Kachouri R."/>
            <person name="Kerrest A."/>
            <person name="Koszul R."/>
            <person name="Lemaire M."/>
            <person name="Lesur I."/>
            <person name="Ma L."/>
            <person name="Muller H."/>
            <person name="Nicaud J.-M."/>
            <person name="Nikolski M."/>
            <person name="Oztas S."/>
            <person name="Ozier-Kalogeropoulos O."/>
            <person name="Pellenz S."/>
            <person name="Potier S."/>
            <person name="Richard G.-F."/>
            <person name="Straub M.-L."/>
            <person name="Suleau A."/>
            <person name="Swennen D."/>
            <person name="Tekaia F."/>
            <person name="Wesolowski-Louvel M."/>
            <person name="Westhof E."/>
            <person name="Wirth B."/>
            <person name="Zeniou-Meyer M."/>
            <person name="Zivanovic Y."/>
            <person name="Bolotin-Fukuhara M."/>
            <person name="Thierry A."/>
            <person name="Bouchier C."/>
            <person name="Caudron B."/>
            <person name="Scarpelli C."/>
            <person name="Gaillardin C."/>
            <person name="Weissenbach J."/>
            <person name="Wincker P."/>
            <person name="Souciet J.-L."/>
        </authorList>
    </citation>
    <scope>NUCLEOTIDE SEQUENCE [LARGE SCALE GENOMIC DNA]</scope>
    <source>
        <strain>ATCC 2001 / BCRC 20586 / JCM 3761 / NBRC 0622 / NRRL Y-65 / CBS 138</strain>
    </source>
</reference>
<organism>
    <name type="scientific">Candida glabrata (strain ATCC 2001 / BCRC 20586 / JCM 3761 / NBRC 0622 / NRRL Y-65 / CBS 138)</name>
    <name type="common">Yeast</name>
    <name type="synonym">Nakaseomyces glabratus</name>
    <dbReference type="NCBI Taxonomy" id="284593"/>
    <lineage>
        <taxon>Eukaryota</taxon>
        <taxon>Fungi</taxon>
        <taxon>Dikarya</taxon>
        <taxon>Ascomycota</taxon>
        <taxon>Saccharomycotina</taxon>
        <taxon>Saccharomycetes</taxon>
        <taxon>Saccharomycetales</taxon>
        <taxon>Saccharomycetaceae</taxon>
        <taxon>Nakaseomyces</taxon>
    </lineage>
</organism>
<evidence type="ECO:0000305" key="1"/>
<feature type="chain" id="PRO_0000131140" description="Large ribosomal subunit protein eL32">
    <location>
        <begin position="1"/>
        <end position="131"/>
    </location>
</feature>
<sequence length="131" mass="14780">MAASLPHPKIVKKHTKKFKRHHSDRYHRVSENWRKQKGIDSVVRRRFRGNISEPTIGYGSNKKTKFMSPSGHKVVLVSNLKDLETLTMHTKSYAAEIAHNVSSKNRVTLLARAKALGVKVTNAKGRLALEA</sequence>
<accession>Q6FS03</accession>
<comment type="similarity">
    <text evidence="1">Belongs to the eukaryotic ribosomal protein eL32 family.</text>
</comment>
<keyword id="KW-1185">Reference proteome</keyword>
<keyword id="KW-0687">Ribonucleoprotein</keyword>
<keyword id="KW-0689">Ribosomal protein</keyword>
<proteinExistence type="inferred from homology"/>
<gene>
    <name type="primary">RPL32</name>
    <name type="ordered locus">CAGL0H04521g</name>
</gene>
<dbReference type="EMBL" id="CR380954">
    <property type="protein sequence ID" value="CAG59924.1"/>
    <property type="molecule type" value="Genomic_DNA"/>
</dbReference>
<dbReference type="RefSeq" id="XP_446991.1">
    <property type="nucleotide sequence ID" value="XM_446991.1"/>
</dbReference>
<dbReference type="SMR" id="Q6FS03"/>
<dbReference type="FunCoup" id="Q6FS03">
    <property type="interactions" value="1042"/>
</dbReference>
<dbReference type="STRING" id="284593.Q6FS03"/>
<dbReference type="EnsemblFungi" id="CAGL0H04521g-T">
    <property type="protein sequence ID" value="CAGL0H04521g-T-p1"/>
    <property type="gene ID" value="CAGL0H04521g"/>
</dbReference>
<dbReference type="KEGG" id="cgr:2888848"/>
<dbReference type="CGD" id="CAL0131998">
    <property type="gene designation" value="CAGL0H04521g"/>
</dbReference>
<dbReference type="VEuPathDB" id="FungiDB:B1J91_H04521g"/>
<dbReference type="VEuPathDB" id="FungiDB:CAGL0H04521g"/>
<dbReference type="eggNOG" id="KOG0878">
    <property type="taxonomic scope" value="Eukaryota"/>
</dbReference>
<dbReference type="HOGENOM" id="CLU_071479_4_0_1"/>
<dbReference type="InParanoid" id="Q6FS03"/>
<dbReference type="OMA" id="GPHNTAK"/>
<dbReference type="Proteomes" id="UP000002428">
    <property type="component" value="Chromosome H"/>
</dbReference>
<dbReference type="GO" id="GO:0022625">
    <property type="term" value="C:cytosolic large ribosomal subunit"/>
    <property type="evidence" value="ECO:0007669"/>
    <property type="project" value="EnsemblFungi"/>
</dbReference>
<dbReference type="GO" id="GO:0005576">
    <property type="term" value="C:extracellular region"/>
    <property type="evidence" value="ECO:0000314"/>
    <property type="project" value="CGD"/>
</dbReference>
<dbReference type="GO" id="GO:0062040">
    <property type="term" value="C:fungal biofilm matrix"/>
    <property type="evidence" value="ECO:0000314"/>
    <property type="project" value="CGD"/>
</dbReference>
<dbReference type="GO" id="GO:0003735">
    <property type="term" value="F:structural constituent of ribosome"/>
    <property type="evidence" value="ECO:0007669"/>
    <property type="project" value="InterPro"/>
</dbReference>
<dbReference type="GO" id="GO:0006412">
    <property type="term" value="P:translation"/>
    <property type="evidence" value="ECO:0007669"/>
    <property type="project" value="InterPro"/>
</dbReference>
<dbReference type="CDD" id="cd00513">
    <property type="entry name" value="Ribosomal_L32_L32e"/>
    <property type="match status" value="1"/>
</dbReference>
<dbReference type="InterPro" id="IPR001515">
    <property type="entry name" value="Ribosomal_eL32"/>
</dbReference>
<dbReference type="InterPro" id="IPR018263">
    <property type="entry name" value="Ribosomal_eL32_CS"/>
</dbReference>
<dbReference type="InterPro" id="IPR036351">
    <property type="entry name" value="Ribosomal_eL32_sf"/>
</dbReference>
<dbReference type="PANTHER" id="PTHR23413">
    <property type="entry name" value="60S RIBOSOMAL PROTEIN L32 AND DNA-DIRECTED RNA POLYMERASE II, SUBUNIT N"/>
    <property type="match status" value="1"/>
</dbReference>
<dbReference type="PANTHER" id="PTHR23413:SF1">
    <property type="entry name" value="RIBOSOMAL PROTEIN L32"/>
    <property type="match status" value="1"/>
</dbReference>
<dbReference type="Pfam" id="PF01655">
    <property type="entry name" value="Ribosomal_L32e"/>
    <property type="match status" value="1"/>
</dbReference>
<dbReference type="SMART" id="SM01393">
    <property type="entry name" value="Ribosomal_L32e"/>
    <property type="match status" value="1"/>
</dbReference>
<dbReference type="SUPFAM" id="SSF52042">
    <property type="entry name" value="Ribosomal protein L32e"/>
    <property type="match status" value="1"/>
</dbReference>
<dbReference type="PROSITE" id="PS00580">
    <property type="entry name" value="RIBOSOMAL_L32E"/>
    <property type="match status" value="1"/>
</dbReference>